<accession>Q9I4D3</accession>
<comment type="function">
    <text evidence="1">Putative quercetin 2,3-dioxygenase.</text>
</comment>
<comment type="catalytic activity">
    <reaction>
        <text>quercetin + O2 = 2-(3,4-dihydroxybenzoyloxy)-4,6-dihydroxybenzoate + CO</text>
        <dbReference type="Rhea" id="RHEA:15381"/>
        <dbReference type="ChEBI" id="CHEBI:15379"/>
        <dbReference type="ChEBI" id="CHEBI:17245"/>
        <dbReference type="ChEBI" id="CHEBI:57628"/>
        <dbReference type="ChEBI" id="CHEBI:57694"/>
        <dbReference type="EC" id="1.13.11.24"/>
    </reaction>
</comment>
<comment type="cofactor">
    <cofactor evidence="1">
        <name>a divalent metal cation</name>
        <dbReference type="ChEBI" id="CHEBI:60240"/>
    </cofactor>
    <text evidence="1">Binds 1 divalent metal cation.</text>
</comment>
<comment type="pathway">
    <text>Flavonoid metabolism; quercetin degradation.</text>
</comment>
<comment type="similarity">
    <text evidence="2">Belongs to the pirin family.</text>
</comment>
<feature type="chain" id="PRO_0000214068" description="Putative quercetin 2,3-dioxygenase PA1205">
    <location>
        <begin position="1"/>
        <end position="315"/>
    </location>
</feature>
<feature type="binding site" evidence="1">
    <location>
        <position position="77"/>
    </location>
    <ligand>
        <name>a divalent metal cation</name>
        <dbReference type="ChEBI" id="CHEBI:60240"/>
    </ligand>
</feature>
<feature type="binding site" evidence="1">
    <location>
        <position position="79"/>
    </location>
    <ligand>
        <name>a divalent metal cation</name>
        <dbReference type="ChEBI" id="CHEBI:60240"/>
    </ligand>
</feature>
<feature type="binding site" evidence="1">
    <location>
        <position position="121"/>
    </location>
    <ligand>
        <name>a divalent metal cation</name>
        <dbReference type="ChEBI" id="CHEBI:60240"/>
    </ligand>
</feature>
<feature type="binding site" evidence="1">
    <location>
        <position position="123"/>
    </location>
    <ligand>
        <name>a divalent metal cation</name>
        <dbReference type="ChEBI" id="CHEBI:60240"/>
    </ligand>
</feature>
<evidence type="ECO:0000250" key="1"/>
<evidence type="ECO:0000305" key="2"/>
<dbReference type="EC" id="1.13.11.24"/>
<dbReference type="EMBL" id="AE004091">
    <property type="protein sequence ID" value="AAG04594.1"/>
    <property type="molecule type" value="Genomic_DNA"/>
</dbReference>
<dbReference type="PIR" id="A83496">
    <property type="entry name" value="A83496"/>
</dbReference>
<dbReference type="RefSeq" id="NP_249896.1">
    <property type="nucleotide sequence ID" value="NC_002516.2"/>
</dbReference>
<dbReference type="RefSeq" id="WP_003112455.1">
    <property type="nucleotide sequence ID" value="NZ_QZGE01000006.1"/>
</dbReference>
<dbReference type="SMR" id="Q9I4D3"/>
<dbReference type="STRING" id="208964.PA1205"/>
<dbReference type="PaxDb" id="208964-PA1205"/>
<dbReference type="DNASU" id="882088"/>
<dbReference type="GeneID" id="882088"/>
<dbReference type="KEGG" id="pae:PA1205"/>
<dbReference type="PATRIC" id="fig|208964.12.peg.1251"/>
<dbReference type="PseudoCAP" id="PA1205"/>
<dbReference type="HOGENOM" id="CLU_045717_1_0_6"/>
<dbReference type="InParanoid" id="Q9I4D3"/>
<dbReference type="OrthoDB" id="9780903at2"/>
<dbReference type="PhylomeDB" id="Q9I4D3"/>
<dbReference type="BioCyc" id="PAER208964:G1FZ6-1230-MONOMER"/>
<dbReference type="UniPathway" id="UPA00724"/>
<dbReference type="Proteomes" id="UP000002438">
    <property type="component" value="Chromosome"/>
</dbReference>
<dbReference type="GO" id="GO:0046872">
    <property type="term" value="F:metal ion binding"/>
    <property type="evidence" value="ECO:0007669"/>
    <property type="project" value="UniProtKB-KW"/>
</dbReference>
<dbReference type="GO" id="GO:0008127">
    <property type="term" value="F:quercetin 2,3-dioxygenase activity"/>
    <property type="evidence" value="ECO:0007669"/>
    <property type="project" value="UniProtKB-EC"/>
</dbReference>
<dbReference type="CDD" id="cd02247">
    <property type="entry name" value="cupin_pirin_C"/>
    <property type="match status" value="1"/>
</dbReference>
<dbReference type="CDD" id="cd02909">
    <property type="entry name" value="cupin_pirin_N"/>
    <property type="match status" value="1"/>
</dbReference>
<dbReference type="Gene3D" id="2.60.120.10">
    <property type="entry name" value="Jelly Rolls"/>
    <property type="match status" value="1"/>
</dbReference>
<dbReference type="InterPro" id="IPR012093">
    <property type="entry name" value="Pirin"/>
</dbReference>
<dbReference type="InterPro" id="IPR008778">
    <property type="entry name" value="Pirin_C_dom"/>
</dbReference>
<dbReference type="InterPro" id="IPR003829">
    <property type="entry name" value="Pirin_N_dom"/>
</dbReference>
<dbReference type="InterPro" id="IPR014710">
    <property type="entry name" value="RmlC-like_jellyroll"/>
</dbReference>
<dbReference type="InterPro" id="IPR011051">
    <property type="entry name" value="RmlC_Cupin_sf"/>
</dbReference>
<dbReference type="PANTHER" id="PTHR13903:SF8">
    <property type="entry name" value="PIRIN"/>
    <property type="match status" value="1"/>
</dbReference>
<dbReference type="PANTHER" id="PTHR13903">
    <property type="entry name" value="PIRIN-RELATED"/>
    <property type="match status" value="1"/>
</dbReference>
<dbReference type="Pfam" id="PF02678">
    <property type="entry name" value="Pirin"/>
    <property type="match status" value="1"/>
</dbReference>
<dbReference type="Pfam" id="PF05726">
    <property type="entry name" value="Pirin_C"/>
    <property type="match status" value="1"/>
</dbReference>
<dbReference type="PIRSF" id="PIRSF006232">
    <property type="entry name" value="Pirin"/>
    <property type="match status" value="1"/>
</dbReference>
<dbReference type="SUPFAM" id="SSF51182">
    <property type="entry name" value="RmlC-like cupins"/>
    <property type="match status" value="1"/>
</dbReference>
<organism>
    <name type="scientific">Pseudomonas aeruginosa (strain ATCC 15692 / DSM 22644 / CIP 104116 / JCM 14847 / LMG 12228 / 1C / PRS 101 / PAO1)</name>
    <dbReference type="NCBI Taxonomy" id="208964"/>
    <lineage>
        <taxon>Bacteria</taxon>
        <taxon>Pseudomonadati</taxon>
        <taxon>Pseudomonadota</taxon>
        <taxon>Gammaproteobacteria</taxon>
        <taxon>Pseudomonadales</taxon>
        <taxon>Pseudomonadaceae</taxon>
        <taxon>Pseudomonas</taxon>
    </lineage>
</organism>
<keyword id="KW-0223">Dioxygenase</keyword>
<keyword id="KW-0479">Metal-binding</keyword>
<keyword id="KW-0560">Oxidoreductase</keyword>
<keyword id="KW-1185">Reference proteome</keyword>
<name>Y1205_PSEAE</name>
<reference key="1">
    <citation type="journal article" date="2000" name="Nature">
        <title>Complete genome sequence of Pseudomonas aeruginosa PAO1, an opportunistic pathogen.</title>
        <authorList>
            <person name="Stover C.K."/>
            <person name="Pham X.-Q.T."/>
            <person name="Erwin A.L."/>
            <person name="Mizoguchi S.D."/>
            <person name="Warrener P."/>
            <person name="Hickey M.J."/>
            <person name="Brinkman F.S.L."/>
            <person name="Hufnagle W.O."/>
            <person name="Kowalik D.J."/>
            <person name="Lagrou M."/>
            <person name="Garber R.L."/>
            <person name="Goltry L."/>
            <person name="Tolentino E."/>
            <person name="Westbrock-Wadman S."/>
            <person name="Yuan Y."/>
            <person name="Brody L.L."/>
            <person name="Coulter S.N."/>
            <person name="Folger K.R."/>
            <person name="Kas A."/>
            <person name="Larbig K."/>
            <person name="Lim R.M."/>
            <person name="Smith K.A."/>
            <person name="Spencer D.H."/>
            <person name="Wong G.K.-S."/>
            <person name="Wu Z."/>
            <person name="Paulsen I.T."/>
            <person name="Reizer J."/>
            <person name="Saier M.H. Jr."/>
            <person name="Hancock R.E.W."/>
            <person name="Lory S."/>
            <person name="Olson M.V."/>
        </authorList>
    </citation>
    <scope>NUCLEOTIDE SEQUENCE [LARGE SCALE GENOMIC DNA]</scope>
    <source>
        <strain>ATCC 15692 / DSM 22644 / CIP 104116 / JCM 14847 / LMG 12228 / 1C / PRS 101 / PAO1</strain>
    </source>
</reference>
<sequence>MSNTEERCDLSSSRDCPERHEHLLQRVTARAAEIGGGITVSRLMPSRQRRMIGAWCFLDHAGPAEFEPGGGLAVGPHPHIGLQTFTWMIQGEALHRDSLGNVQVIRPGQVNLMTAGHGIAHTEESLPDERHAHAAQLWIALPYEQRDIAPAFDHHPDLPRWQEQGVTFTLLAGALAGRQAPCRLYSPLLGADLACHDASTLQLTLDPHFEYGLLPLEGGLEVGGEHFAVNELAYLGDGRDGLQLQLDPGARVLLLGGAPFGAEIFMWWNFVGHSKGEIARAQKAWEEGDARFGRLDALEGPRLSAPPIPWKIDAE</sequence>
<protein>
    <recommendedName>
        <fullName>Putative quercetin 2,3-dioxygenase PA1205</fullName>
        <shortName>Putative quercetinase</shortName>
        <ecNumber>1.13.11.24</ecNumber>
    </recommendedName>
    <alternativeName>
        <fullName>Pirin-like protein PA1205</fullName>
    </alternativeName>
</protein>
<gene>
    <name type="ordered locus">PA1205</name>
</gene>
<proteinExistence type="inferred from homology"/>